<feature type="chain" id="PRO_1000187578" description="Segregation and condensation protein A">
    <location>
        <begin position="1"/>
        <end position="243"/>
    </location>
</feature>
<keyword id="KW-0131">Cell cycle</keyword>
<keyword id="KW-0132">Cell division</keyword>
<keyword id="KW-0159">Chromosome partition</keyword>
<keyword id="KW-0963">Cytoplasm</keyword>
<keyword id="KW-1185">Reference proteome</keyword>
<name>SCPA_THEP3</name>
<evidence type="ECO:0000255" key="1">
    <source>
        <dbReference type="HAMAP-Rule" id="MF_01805"/>
    </source>
</evidence>
<sequence>MYNVKLEVFEGPFDLLFHLIEKNEIDLMDIPISVILDQYMEYIKTLQEMDLNVASEFIVMAATLLEIKSKMLLPKQKFEGQQLEMEEVDPREELVTKLIEYKKYKIIAQTFKEMCKIGSRFFREEPEVKYIDKKIAFNYSSEDIYKAYLKVISKNNAKEDEIEIKKDEYTVESKIKELLVKLVKKTVLWFSEFIKKSRAKGEIIVSFIAVLELVRLNKIIAEQKTTYGDILIKSFGRGEKNEQ</sequence>
<dbReference type="EMBL" id="CP000924">
    <property type="protein sequence ID" value="ABY94784.1"/>
    <property type="molecule type" value="Genomic_DNA"/>
</dbReference>
<dbReference type="RefSeq" id="WP_012268718.1">
    <property type="nucleotide sequence ID" value="NC_010321.1"/>
</dbReference>
<dbReference type="SMR" id="B0K9H1"/>
<dbReference type="STRING" id="340099.Teth39_1129"/>
<dbReference type="KEGG" id="tpd:Teth39_1129"/>
<dbReference type="eggNOG" id="COG1354">
    <property type="taxonomic scope" value="Bacteria"/>
</dbReference>
<dbReference type="HOGENOM" id="CLU_038686_3_0_9"/>
<dbReference type="Proteomes" id="UP000002156">
    <property type="component" value="Chromosome"/>
</dbReference>
<dbReference type="GO" id="GO:0005737">
    <property type="term" value="C:cytoplasm"/>
    <property type="evidence" value="ECO:0007669"/>
    <property type="project" value="UniProtKB-SubCell"/>
</dbReference>
<dbReference type="GO" id="GO:0051301">
    <property type="term" value="P:cell division"/>
    <property type="evidence" value="ECO:0007669"/>
    <property type="project" value="UniProtKB-KW"/>
</dbReference>
<dbReference type="GO" id="GO:0007059">
    <property type="term" value="P:chromosome segregation"/>
    <property type="evidence" value="ECO:0007669"/>
    <property type="project" value="UniProtKB-UniRule"/>
</dbReference>
<dbReference type="GO" id="GO:0006260">
    <property type="term" value="P:DNA replication"/>
    <property type="evidence" value="ECO:0007669"/>
    <property type="project" value="UniProtKB-UniRule"/>
</dbReference>
<dbReference type="Gene3D" id="6.10.250.2410">
    <property type="match status" value="1"/>
</dbReference>
<dbReference type="Gene3D" id="1.10.10.580">
    <property type="entry name" value="Structural maintenance of chromosome 1. Chain E"/>
    <property type="match status" value="1"/>
</dbReference>
<dbReference type="HAMAP" id="MF_01805">
    <property type="entry name" value="ScpA"/>
    <property type="match status" value="1"/>
</dbReference>
<dbReference type="InterPro" id="IPR003768">
    <property type="entry name" value="ScpA"/>
</dbReference>
<dbReference type="InterPro" id="IPR023093">
    <property type="entry name" value="ScpA-like_C"/>
</dbReference>
<dbReference type="PANTHER" id="PTHR33969">
    <property type="entry name" value="SEGREGATION AND CONDENSATION PROTEIN A"/>
    <property type="match status" value="1"/>
</dbReference>
<dbReference type="PANTHER" id="PTHR33969:SF2">
    <property type="entry name" value="SEGREGATION AND CONDENSATION PROTEIN A"/>
    <property type="match status" value="1"/>
</dbReference>
<dbReference type="Pfam" id="PF02616">
    <property type="entry name" value="SMC_ScpA"/>
    <property type="match status" value="1"/>
</dbReference>
<protein>
    <recommendedName>
        <fullName evidence="1">Segregation and condensation protein A</fullName>
    </recommendedName>
</protein>
<gene>
    <name evidence="1" type="primary">scpA</name>
    <name type="ordered locus">Teth39_1129</name>
</gene>
<accession>B0K9H1</accession>
<comment type="function">
    <text evidence="1">Participates in chromosomal partition during cell division. May act via the formation of a condensin-like complex containing Smc and ScpB that pull DNA away from mid-cell into both cell halves.</text>
</comment>
<comment type="subunit">
    <text evidence="1">Component of a cohesin-like complex composed of ScpA, ScpB and the Smc homodimer, in which ScpA and ScpB bind to the head domain of Smc. The presence of the three proteins is required for the association of the complex with DNA.</text>
</comment>
<comment type="subcellular location">
    <subcellularLocation>
        <location evidence="1">Cytoplasm</location>
    </subcellularLocation>
    <text evidence="1">Associated with two foci at the outer edges of the nucleoid region in young cells, and at four foci within both cell halves in older cells.</text>
</comment>
<comment type="similarity">
    <text evidence="1">Belongs to the ScpA family.</text>
</comment>
<proteinExistence type="inferred from homology"/>
<reference key="1">
    <citation type="submission" date="2008-01" db="EMBL/GenBank/DDBJ databases">
        <title>Complete sequence of Thermoanaerobacter pseudethanolicus 39E.</title>
        <authorList>
            <person name="Copeland A."/>
            <person name="Lucas S."/>
            <person name="Lapidus A."/>
            <person name="Barry K."/>
            <person name="Glavina del Rio T."/>
            <person name="Dalin E."/>
            <person name="Tice H."/>
            <person name="Pitluck S."/>
            <person name="Bruce D."/>
            <person name="Goodwin L."/>
            <person name="Saunders E."/>
            <person name="Brettin T."/>
            <person name="Detter J.C."/>
            <person name="Han C."/>
            <person name="Schmutz J."/>
            <person name="Larimer F."/>
            <person name="Land M."/>
            <person name="Hauser L."/>
            <person name="Kyrpides N."/>
            <person name="Lykidis A."/>
            <person name="Hemme C."/>
            <person name="Fields M.W."/>
            <person name="He Z."/>
            <person name="Zhou J."/>
            <person name="Richardson P."/>
        </authorList>
    </citation>
    <scope>NUCLEOTIDE SEQUENCE [LARGE SCALE GENOMIC DNA]</scope>
    <source>
        <strain>ATCC 33223 / DSM 2355 / 39E</strain>
    </source>
</reference>
<organism>
    <name type="scientific">Thermoanaerobacter pseudethanolicus (strain ATCC 33223 / 39E)</name>
    <name type="common">Clostridium thermohydrosulfuricum</name>
    <dbReference type="NCBI Taxonomy" id="340099"/>
    <lineage>
        <taxon>Bacteria</taxon>
        <taxon>Bacillati</taxon>
        <taxon>Bacillota</taxon>
        <taxon>Clostridia</taxon>
        <taxon>Thermoanaerobacterales</taxon>
        <taxon>Thermoanaerobacteraceae</taxon>
        <taxon>Thermoanaerobacter</taxon>
    </lineage>
</organism>